<protein>
    <recommendedName>
        <fullName evidence="1">Putative hydro-lyase cgR_2449</fullName>
        <ecNumber evidence="1">4.2.1.-</ecNumber>
    </recommendedName>
</protein>
<sequence length="264" mass="28352">MNRSTISPVEARQQFRAGLIQPTSGWSAGFAQANLISMPQDLAYDFLLFAQRNPKPCPILEVLNAGETFGGIFGSNATEADIRTDAPQYRIYEHGELIDSPASAVDYWRDDLVSFIIGCSFTFEHPMVQAGVPVRHLEAGRNVPMYETSLACRPAGSLSGNLVVSLRMIPASQVADAVRITSRYPAVHGAPVHIGDPSLIGIDDINNPDFGDAPLSEPGDVPVFWACGVTPQAMVMSSKPPLAITHAPGHMLITDAPDLGFQVP</sequence>
<accession>A4QGU3</accession>
<keyword id="KW-0456">Lyase</keyword>
<feature type="chain" id="PRO_1000070411" description="Putative hydro-lyase cgR_2449">
    <location>
        <begin position="1"/>
        <end position="264"/>
    </location>
</feature>
<gene>
    <name type="ordered locus">cgR_2449</name>
</gene>
<name>Y2449_CORGB</name>
<dbReference type="EC" id="4.2.1.-" evidence="1"/>
<dbReference type="EMBL" id="AP009044">
    <property type="protein sequence ID" value="BAF55459.1"/>
    <property type="molecule type" value="Genomic_DNA"/>
</dbReference>
<dbReference type="RefSeq" id="WP_003857919.1">
    <property type="nucleotide sequence ID" value="NC_009342.1"/>
</dbReference>
<dbReference type="SMR" id="A4QGU3"/>
<dbReference type="KEGG" id="cgt:cgR_2449"/>
<dbReference type="HOGENOM" id="CLU_059759_0_0_11"/>
<dbReference type="PhylomeDB" id="A4QGU3"/>
<dbReference type="Proteomes" id="UP000006698">
    <property type="component" value="Chromosome"/>
</dbReference>
<dbReference type="GO" id="GO:0016829">
    <property type="term" value="F:lyase activity"/>
    <property type="evidence" value="ECO:0007669"/>
    <property type="project" value="UniProtKB-KW"/>
</dbReference>
<dbReference type="FunFam" id="3.30.2040.10:FF:000001">
    <property type="entry name" value="D-glutamate cyclase, mitochondrial"/>
    <property type="match status" value="1"/>
</dbReference>
<dbReference type="Gene3D" id="3.40.1640.10">
    <property type="entry name" value="PSTPO5379-like"/>
    <property type="match status" value="1"/>
</dbReference>
<dbReference type="Gene3D" id="3.30.2040.10">
    <property type="entry name" value="PSTPO5379-like domain"/>
    <property type="match status" value="1"/>
</dbReference>
<dbReference type="HAMAP" id="MF_01830">
    <property type="entry name" value="Hydro_lyase"/>
    <property type="match status" value="1"/>
</dbReference>
<dbReference type="InterPro" id="IPR009906">
    <property type="entry name" value="D-Glu_cyclase"/>
</dbReference>
<dbReference type="InterPro" id="IPR038021">
    <property type="entry name" value="Putative_hydro-lyase"/>
</dbReference>
<dbReference type="InterPro" id="IPR016938">
    <property type="entry name" value="UPF0317"/>
</dbReference>
<dbReference type="NCBIfam" id="NF003969">
    <property type="entry name" value="PRK05463.1"/>
    <property type="match status" value="1"/>
</dbReference>
<dbReference type="PANTHER" id="PTHR32022">
    <property type="entry name" value="D-GLUTAMATE CYCLASE, MITOCHONDRIAL"/>
    <property type="match status" value="1"/>
</dbReference>
<dbReference type="PANTHER" id="PTHR32022:SF10">
    <property type="entry name" value="D-GLUTAMATE CYCLASE, MITOCHONDRIAL"/>
    <property type="match status" value="1"/>
</dbReference>
<dbReference type="Pfam" id="PF07286">
    <property type="entry name" value="D-Glu_cyclase"/>
    <property type="match status" value="1"/>
</dbReference>
<dbReference type="PIRSF" id="PIRSF029755">
    <property type="entry name" value="UCP029755"/>
    <property type="match status" value="1"/>
</dbReference>
<dbReference type="SUPFAM" id="SSF160920">
    <property type="entry name" value="PSTPO5379-like"/>
    <property type="match status" value="1"/>
</dbReference>
<reference key="1">
    <citation type="journal article" date="2007" name="Microbiology">
        <title>Comparative analysis of the Corynebacterium glutamicum group and complete genome sequence of strain R.</title>
        <authorList>
            <person name="Yukawa H."/>
            <person name="Omumasaba C.A."/>
            <person name="Nonaka H."/>
            <person name="Kos P."/>
            <person name="Okai N."/>
            <person name="Suzuki N."/>
            <person name="Suda M."/>
            <person name="Tsuge Y."/>
            <person name="Watanabe J."/>
            <person name="Ikeda Y."/>
            <person name="Vertes A.A."/>
            <person name="Inui M."/>
        </authorList>
    </citation>
    <scope>NUCLEOTIDE SEQUENCE [LARGE SCALE GENOMIC DNA]</scope>
    <source>
        <strain>R</strain>
    </source>
</reference>
<proteinExistence type="inferred from homology"/>
<comment type="similarity">
    <text evidence="1">Belongs to the D-glutamate cyclase family.</text>
</comment>
<evidence type="ECO:0000255" key="1">
    <source>
        <dbReference type="HAMAP-Rule" id="MF_01830"/>
    </source>
</evidence>
<organism>
    <name type="scientific">Corynebacterium glutamicum (strain R)</name>
    <dbReference type="NCBI Taxonomy" id="340322"/>
    <lineage>
        <taxon>Bacteria</taxon>
        <taxon>Bacillati</taxon>
        <taxon>Actinomycetota</taxon>
        <taxon>Actinomycetes</taxon>
        <taxon>Mycobacteriales</taxon>
        <taxon>Corynebacteriaceae</taxon>
        <taxon>Corynebacterium</taxon>
    </lineage>
</organism>